<protein>
    <recommendedName>
        <fullName>Thymosin beta-4</fullName>
        <shortName>T beta 4</shortName>
    </recommendedName>
    <alternativeName>
        <fullName evidence="5">Thymosin beta 4Xen</fullName>
    </alternativeName>
</protein>
<evidence type="ECO:0000250" key="1">
    <source>
        <dbReference type="UniProtKB" id="P62328"/>
    </source>
</evidence>
<evidence type="ECO:0000256" key="2">
    <source>
        <dbReference type="SAM" id="MobiDB-lite"/>
    </source>
</evidence>
<evidence type="ECO:0000269" key="3">
    <source>
    </source>
</evidence>
<evidence type="ECO:0000269" key="4">
    <source>
    </source>
</evidence>
<evidence type="ECO:0000303" key="5">
    <source>
    </source>
</evidence>
<evidence type="ECO:0000305" key="6"/>
<organism>
    <name type="scientific">Xenopus laevis</name>
    <name type="common">African clawed frog</name>
    <dbReference type="NCBI Taxonomy" id="8355"/>
    <lineage>
        <taxon>Eukaryota</taxon>
        <taxon>Metazoa</taxon>
        <taxon>Chordata</taxon>
        <taxon>Craniata</taxon>
        <taxon>Vertebrata</taxon>
        <taxon>Euteleostomi</taxon>
        <taxon>Amphibia</taxon>
        <taxon>Batrachia</taxon>
        <taxon>Anura</taxon>
        <taxon>Pipoidea</taxon>
        <taxon>Pipidae</taxon>
        <taxon>Xenopodinae</taxon>
        <taxon>Xenopus</taxon>
        <taxon>Xenopus</taxon>
    </lineage>
</organism>
<feature type="initiator methionine" description="Removed" evidence="4">
    <location>
        <position position="1"/>
    </location>
</feature>
<feature type="chain" id="PRO_0000045928" description="Thymosin beta-4" evidence="4">
    <location>
        <begin position="2"/>
        <end position="44"/>
    </location>
</feature>
<feature type="region of interest" description="Disordered" evidence="2">
    <location>
        <begin position="1"/>
        <end position="44"/>
    </location>
</feature>
<feature type="compositionally biased region" description="Basic and acidic residues" evidence="2">
    <location>
        <begin position="1"/>
        <end position="25"/>
    </location>
</feature>
<feature type="compositionally biased region" description="Basic and acidic residues" evidence="2">
    <location>
        <begin position="33"/>
        <end position="44"/>
    </location>
</feature>
<feature type="modified residue" description="N-acetylserine" evidence="4">
    <location>
        <position position="2"/>
    </location>
</feature>
<feature type="sequence conflict" description="In Ref. 1; BAA01534." evidence="6" ref="1">
    <original>TS</original>
    <variation>ST</variation>
    <location>
        <begin position="41"/>
        <end position="42"/>
    </location>
</feature>
<gene>
    <name type="primary">tmsb4</name>
</gene>
<dbReference type="EMBL" id="D10692">
    <property type="protein sequence ID" value="BAA01534.1"/>
    <property type="molecule type" value="mRNA"/>
</dbReference>
<dbReference type="PIR" id="JQ1489">
    <property type="entry name" value="JQ1489"/>
</dbReference>
<dbReference type="RefSeq" id="NP_001084321.1">
    <property type="nucleotide sequence ID" value="NM_001090852.2"/>
</dbReference>
<dbReference type="SMR" id="P18758"/>
<dbReference type="iPTMnet" id="P18758"/>
<dbReference type="GeneID" id="108709680"/>
<dbReference type="GeneID" id="399438"/>
<dbReference type="KEGG" id="xla:108709680"/>
<dbReference type="KEGG" id="xla:399438"/>
<dbReference type="AGR" id="Xenbase:XB-GENE-6253898"/>
<dbReference type="CTD" id="108709680"/>
<dbReference type="CTD" id="399438"/>
<dbReference type="Xenbase" id="XB-GENE-6253898">
    <property type="gene designation" value="tmsb4x.L"/>
</dbReference>
<dbReference type="OrthoDB" id="2151618at2759"/>
<dbReference type="Proteomes" id="UP000186698">
    <property type="component" value="Chromosome 2L"/>
</dbReference>
<dbReference type="Proteomes" id="UP000186698">
    <property type="component" value="Chromosome 2S"/>
</dbReference>
<dbReference type="Bgee" id="108709680">
    <property type="expression patterns" value="Expressed in lung and 19 other cell types or tissues"/>
</dbReference>
<dbReference type="GO" id="GO:0005737">
    <property type="term" value="C:cytoplasm"/>
    <property type="evidence" value="ECO:0000318"/>
    <property type="project" value="GO_Central"/>
</dbReference>
<dbReference type="GO" id="GO:0005856">
    <property type="term" value="C:cytoskeleton"/>
    <property type="evidence" value="ECO:0007669"/>
    <property type="project" value="UniProtKB-SubCell"/>
</dbReference>
<dbReference type="GO" id="GO:0003785">
    <property type="term" value="F:actin monomer binding"/>
    <property type="evidence" value="ECO:0000318"/>
    <property type="project" value="GO_Central"/>
</dbReference>
<dbReference type="GO" id="GO:0007015">
    <property type="term" value="P:actin filament organization"/>
    <property type="evidence" value="ECO:0007669"/>
    <property type="project" value="InterPro"/>
</dbReference>
<dbReference type="GO" id="GO:0030334">
    <property type="term" value="P:regulation of cell migration"/>
    <property type="evidence" value="ECO:0000318"/>
    <property type="project" value="GO_Central"/>
</dbReference>
<dbReference type="CDD" id="cd22059">
    <property type="entry name" value="WH2_BetaT"/>
    <property type="match status" value="1"/>
</dbReference>
<dbReference type="FunFam" id="1.20.5.520:FF:000001">
    <property type="entry name" value="Thymosin beta"/>
    <property type="match status" value="1"/>
</dbReference>
<dbReference type="Gene3D" id="1.20.5.520">
    <property type="entry name" value="Single helix bin"/>
    <property type="match status" value="1"/>
</dbReference>
<dbReference type="InterPro" id="IPR001152">
    <property type="entry name" value="Beta-thymosin"/>
</dbReference>
<dbReference type="InterPro" id="IPR038386">
    <property type="entry name" value="Beta-thymosin_sf"/>
</dbReference>
<dbReference type="PANTHER" id="PTHR12021">
    <property type="entry name" value="THYMOSIN BETA"/>
    <property type="match status" value="1"/>
</dbReference>
<dbReference type="PANTHER" id="PTHR12021:SF3">
    <property type="entry name" value="THYMOSIN BETA-4-LIKE"/>
    <property type="match status" value="1"/>
</dbReference>
<dbReference type="Pfam" id="PF01290">
    <property type="entry name" value="Thymosin"/>
    <property type="match status" value="1"/>
</dbReference>
<dbReference type="PIRSF" id="PIRSF001828">
    <property type="entry name" value="Thymosin_beta"/>
    <property type="match status" value="1"/>
</dbReference>
<dbReference type="SMART" id="SM00152">
    <property type="entry name" value="THY"/>
    <property type="match status" value="1"/>
</dbReference>
<dbReference type="PROSITE" id="PS00500">
    <property type="entry name" value="THYMOSIN_B4"/>
    <property type="match status" value="1"/>
</dbReference>
<proteinExistence type="evidence at protein level"/>
<reference key="1">
    <citation type="journal article" date="1992" name="Biochem. Biophys. Res. Commun.">
        <title>Expression of thymosin beta 4 gene during Xenopus laevis embryogenesis.</title>
        <authorList>
            <person name="Yamamoto M."/>
            <person name="Shoda A."/>
            <person name="Minamino N."/>
            <person name="Matsuo H."/>
            <person name="Nishimatsu S."/>
            <person name="Ueno N."/>
            <person name="Murakami K."/>
        </authorList>
    </citation>
    <scope>NUCLEOTIDE SEQUENCE [MRNA]</scope>
    <scope>TISSUE SPECIFICITY</scope>
</reference>
<reference key="2">
    <citation type="journal article" date="1988" name="Arch. Biochem. Biophys.">
        <title>Thymosin beta 4Xen: a new thymosin beta 4-like peptide in oocytes of Xenopus laevis.</title>
        <authorList>
            <person name="Hannappel E."/>
            <person name="Kalbacher H."/>
            <person name="Voelter W."/>
        </authorList>
    </citation>
    <scope>PROTEIN SEQUENCE OF 2-44</scope>
    <scope>ACETYLATION AT SER-2</scope>
    <source>
        <tissue>Oocyte</tissue>
    </source>
</reference>
<sequence length="44" mass="5097">MSDKPDMAEIEKFDKAKLKKTETQEKNPLPSKETIEQEKQTSES</sequence>
<accession>P18758</accession>
<name>TYB4_XENLA</name>
<comment type="function">
    <text evidence="1">Plays an important role in the organization of the cytoskeleton. Binds to and sequesters actin monomers (G actin) and therefore inhibits actin polymerization.</text>
</comment>
<comment type="subcellular location">
    <subcellularLocation>
        <location evidence="1">Cytoplasm</location>
        <location evidence="1">Cytoskeleton</location>
    </subcellularLocation>
</comment>
<comment type="tissue specificity">
    <text evidence="3">Spleen, kidney, heart, and oocytes.</text>
</comment>
<comment type="similarity">
    <text evidence="6">Belongs to the thymosin beta family.</text>
</comment>
<keyword id="KW-0007">Acetylation</keyword>
<keyword id="KW-0009">Actin-binding</keyword>
<keyword id="KW-0963">Cytoplasm</keyword>
<keyword id="KW-0206">Cytoskeleton</keyword>
<keyword id="KW-0903">Direct protein sequencing</keyword>
<keyword id="KW-1185">Reference proteome</keyword>